<comment type="function">
    <text evidence="1">Na(+)/H(+) antiporter that extrudes sodium in exchange for external protons.</text>
</comment>
<comment type="catalytic activity">
    <reaction evidence="1">
        <text>Na(+)(in) + 2 H(+)(out) = Na(+)(out) + 2 H(+)(in)</text>
        <dbReference type="Rhea" id="RHEA:29251"/>
        <dbReference type="ChEBI" id="CHEBI:15378"/>
        <dbReference type="ChEBI" id="CHEBI:29101"/>
    </reaction>
    <physiologicalReaction direction="left-to-right" evidence="1">
        <dbReference type="Rhea" id="RHEA:29252"/>
    </physiologicalReaction>
</comment>
<comment type="subcellular location">
    <subcellularLocation>
        <location evidence="1">Cell inner membrane</location>
        <topology evidence="1">Multi-pass membrane protein</topology>
    </subcellularLocation>
</comment>
<comment type="similarity">
    <text evidence="1">Belongs to the NhaA Na(+)/H(+) (TC 2.A.33) antiporter family.</text>
</comment>
<dbReference type="EMBL" id="AE014075">
    <property type="protein sequence ID" value="AAN78524.1"/>
    <property type="molecule type" value="Genomic_DNA"/>
</dbReference>
<dbReference type="RefSeq" id="WP_000681386.1">
    <property type="nucleotide sequence ID" value="NZ_CP051263.1"/>
</dbReference>
<dbReference type="SMR" id="Q8FLC1"/>
<dbReference type="STRING" id="199310.c0024"/>
<dbReference type="KEGG" id="ecc:c0024"/>
<dbReference type="eggNOG" id="COG3004">
    <property type="taxonomic scope" value="Bacteria"/>
</dbReference>
<dbReference type="HOGENOM" id="CLU_015803_1_0_6"/>
<dbReference type="BioCyc" id="ECOL199310:C0024-MONOMER"/>
<dbReference type="Proteomes" id="UP000001410">
    <property type="component" value="Chromosome"/>
</dbReference>
<dbReference type="GO" id="GO:0005886">
    <property type="term" value="C:plasma membrane"/>
    <property type="evidence" value="ECO:0007669"/>
    <property type="project" value="UniProtKB-SubCell"/>
</dbReference>
<dbReference type="GO" id="GO:0015385">
    <property type="term" value="F:sodium:proton antiporter activity"/>
    <property type="evidence" value="ECO:0007669"/>
    <property type="project" value="TreeGrafter"/>
</dbReference>
<dbReference type="GO" id="GO:0006885">
    <property type="term" value="P:regulation of pH"/>
    <property type="evidence" value="ECO:0007669"/>
    <property type="project" value="InterPro"/>
</dbReference>
<dbReference type="FunFam" id="1.20.1530.10:FF:000001">
    <property type="entry name" value="Na(+)/H(+) antiporter NhaA"/>
    <property type="match status" value="1"/>
</dbReference>
<dbReference type="Gene3D" id="1.20.1530.10">
    <property type="entry name" value="Na+/H+ antiporter like domain"/>
    <property type="match status" value="1"/>
</dbReference>
<dbReference type="HAMAP" id="MF_01844">
    <property type="entry name" value="NhaA"/>
    <property type="match status" value="1"/>
</dbReference>
<dbReference type="InterPro" id="IPR023171">
    <property type="entry name" value="Na/H_antiporter_dom_sf"/>
</dbReference>
<dbReference type="InterPro" id="IPR004670">
    <property type="entry name" value="NhaA"/>
</dbReference>
<dbReference type="NCBIfam" id="TIGR00773">
    <property type="entry name" value="NhaA"/>
    <property type="match status" value="1"/>
</dbReference>
<dbReference type="NCBIfam" id="NF007111">
    <property type="entry name" value="PRK09560.1"/>
    <property type="match status" value="1"/>
</dbReference>
<dbReference type="NCBIfam" id="NF007112">
    <property type="entry name" value="PRK09561.1"/>
    <property type="match status" value="1"/>
</dbReference>
<dbReference type="PANTHER" id="PTHR30341:SF0">
    <property type="entry name" value="NA(+)_H(+) ANTIPORTER NHAA"/>
    <property type="match status" value="1"/>
</dbReference>
<dbReference type="PANTHER" id="PTHR30341">
    <property type="entry name" value="SODIUM ION/PROTON ANTIPORTER NHAA-RELATED"/>
    <property type="match status" value="1"/>
</dbReference>
<dbReference type="Pfam" id="PF06965">
    <property type="entry name" value="Na_H_antiport_1"/>
    <property type="match status" value="1"/>
</dbReference>
<proteinExistence type="inferred from homology"/>
<evidence type="ECO:0000255" key="1">
    <source>
        <dbReference type="HAMAP-Rule" id="MF_01844"/>
    </source>
</evidence>
<accession>Q8FLC1</accession>
<feature type="chain" id="PRO_0000334288" description="Na(+)/H(+) antiporter NhaA">
    <location>
        <begin position="1"/>
        <end position="388"/>
    </location>
</feature>
<feature type="topological domain" description="Cytoplasmic" evidence="1">
    <location>
        <begin position="1"/>
        <end position="11"/>
    </location>
</feature>
<feature type="transmembrane region" description="Helical; Name=1" evidence="1">
    <location>
        <begin position="12"/>
        <end position="31"/>
    </location>
</feature>
<feature type="topological domain" description="Periplasmic" evidence="1">
    <location>
        <begin position="32"/>
        <end position="58"/>
    </location>
</feature>
<feature type="transmembrane region" description="Helical; Name=2" evidence="1">
    <location>
        <begin position="59"/>
        <end position="80"/>
    </location>
</feature>
<feature type="topological domain" description="Cytoplasmic" evidence="1">
    <location>
        <begin position="81"/>
        <end position="96"/>
    </location>
</feature>
<feature type="transmembrane region" description="Helical; Name=3" evidence="1">
    <location>
        <begin position="97"/>
        <end position="116"/>
    </location>
</feature>
<feature type="topological domain" description="Periplasmic" evidence="1">
    <location>
        <begin position="117"/>
        <end position="122"/>
    </location>
</feature>
<feature type="transmembrane region" description="Helical; Name=4" evidence="1">
    <location>
        <begin position="123"/>
        <end position="130"/>
    </location>
</feature>
<feature type="topological domain" description="Cytoplasmic" evidence="1">
    <location>
        <begin position="131"/>
        <end position="154"/>
    </location>
</feature>
<feature type="transmembrane region" description="Helical; Name=5" evidence="1">
    <location>
        <begin position="155"/>
        <end position="176"/>
    </location>
</feature>
<feature type="topological domain" description="Periplasmic" evidence="1">
    <location>
        <begin position="177"/>
        <end position="180"/>
    </location>
</feature>
<feature type="transmembrane region" description="Helical; Name=6" evidence="1">
    <location>
        <begin position="181"/>
        <end position="200"/>
    </location>
</feature>
<feature type="topological domain" description="Cytoplasmic" evidence="1">
    <location>
        <begin position="201"/>
        <end position="204"/>
    </location>
</feature>
<feature type="transmembrane region" description="Helical; Name=7" evidence="1">
    <location>
        <begin position="205"/>
        <end position="222"/>
    </location>
</feature>
<feature type="topological domain" description="Periplasmic" evidence="1">
    <location>
        <position position="223"/>
    </location>
</feature>
<feature type="transmembrane region" description="Helical; Name=8" evidence="1">
    <location>
        <begin position="224"/>
        <end position="236"/>
    </location>
</feature>
<feature type="topological domain" description="Cytoplasmic" evidence="1">
    <location>
        <begin position="237"/>
        <end position="253"/>
    </location>
</feature>
<feature type="transmembrane region" description="Helical; Name=9" evidence="1">
    <location>
        <begin position="254"/>
        <end position="272"/>
    </location>
</feature>
<feature type="topological domain" description="Periplasmic" evidence="1">
    <location>
        <begin position="273"/>
        <end position="286"/>
    </location>
</feature>
<feature type="transmembrane region" description="Helical; Name=10" evidence="1">
    <location>
        <begin position="287"/>
        <end position="310"/>
    </location>
</feature>
<feature type="topological domain" description="Cytoplasmic" evidence="1">
    <location>
        <begin position="311"/>
        <end position="339"/>
    </location>
</feature>
<feature type="transmembrane region" description="Helical; Name=11" evidence="1">
    <location>
        <begin position="340"/>
        <end position="350"/>
    </location>
</feature>
<feature type="topological domain" description="Periplasmic" evidence="1">
    <location>
        <begin position="351"/>
        <end position="357"/>
    </location>
</feature>
<feature type="transmembrane region" description="Helical; Name=12" evidence="1">
    <location>
        <begin position="358"/>
        <end position="380"/>
    </location>
</feature>
<feature type="topological domain" description="Cytoplasmic" evidence="1">
    <location>
        <begin position="381"/>
        <end position="388"/>
    </location>
</feature>
<sequence length="388" mass="41398">MKHLHRFFSSDASGGIILIIAAVLAMIMANSGATSGWYHDFLETPVQLRVGTLEINKNMLLWINDALMAVFFLLVGLEVKRELMQGSLASLRQAAFPVIAAIGGMIVPALLYLAFNYADPITREGWAIPAATDIAFALGVLALLGSRVPLALKIFLMALAIIDDLGAIIIIALFYTNDLSMASLGVAAVAIAVLVVLNLCGVRRTGVYILVGVVLWTAVLKSGVHATLAGVIVGFFIPLKEKHGRSPAKRLEHVLHPWVAYLILPLFAFANAGVSLQGVTLEGLTSILPLGIIAGLLIGKPLGISLFCWLALRLKLAHLPEGTTYQQIMAVGILCGIGFTMSIFIASLAFGSVDPELINWAKLGILVGSISSAVIGYSWLRVRLRPSV</sequence>
<reference key="1">
    <citation type="journal article" date="2002" name="Proc. Natl. Acad. Sci. U.S.A.">
        <title>Extensive mosaic structure revealed by the complete genome sequence of uropathogenic Escherichia coli.</title>
        <authorList>
            <person name="Welch R.A."/>
            <person name="Burland V."/>
            <person name="Plunkett G. III"/>
            <person name="Redford P."/>
            <person name="Roesch P."/>
            <person name="Rasko D."/>
            <person name="Buckles E.L."/>
            <person name="Liou S.-R."/>
            <person name="Boutin A."/>
            <person name="Hackett J."/>
            <person name="Stroud D."/>
            <person name="Mayhew G.F."/>
            <person name="Rose D.J."/>
            <person name="Zhou S."/>
            <person name="Schwartz D.C."/>
            <person name="Perna N.T."/>
            <person name="Mobley H.L.T."/>
            <person name="Donnenberg M.S."/>
            <person name="Blattner F.R."/>
        </authorList>
    </citation>
    <scope>NUCLEOTIDE SEQUENCE [LARGE SCALE GENOMIC DNA]</scope>
    <source>
        <strain>CFT073 / ATCC 700928 / UPEC</strain>
    </source>
</reference>
<organism>
    <name type="scientific">Escherichia coli O6:H1 (strain CFT073 / ATCC 700928 / UPEC)</name>
    <dbReference type="NCBI Taxonomy" id="199310"/>
    <lineage>
        <taxon>Bacteria</taxon>
        <taxon>Pseudomonadati</taxon>
        <taxon>Pseudomonadota</taxon>
        <taxon>Gammaproteobacteria</taxon>
        <taxon>Enterobacterales</taxon>
        <taxon>Enterobacteriaceae</taxon>
        <taxon>Escherichia</taxon>
    </lineage>
</organism>
<name>NHAA_ECOL6</name>
<protein>
    <recommendedName>
        <fullName evidence="1">Na(+)/H(+) antiporter NhaA</fullName>
    </recommendedName>
    <alternativeName>
        <fullName evidence="1">Sodium/proton antiporter NhaA</fullName>
    </alternativeName>
</protein>
<gene>
    <name evidence="1" type="primary">nhaA</name>
    <name type="ordered locus">c0024</name>
</gene>
<keyword id="KW-0050">Antiport</keyword>
<keyword id="KW-0997">Cell inner membrane</keyword>
<keyword id="KW-1003">Cell membrane</keyword>
<keyword id="KW-0406">Ion transport</keyword>
<keyword id="KW-0472">Membrane</keyword>
<keyword id="KW-1185">Reference proteome</keyword>
<keyword id="KW-0915">Sodium</keyword>
<keyword id="KW-0739">Sodium transport</keyword>
<keyword id="KW-0812">Transmembrane</keyword>
<keyword id="KW-1133">Transmembrane helix</keyword>
<keyword id="KW-0813">Transport</keyword>